<gene>
    <name type="ORF">K02F3.12</name>
</gene>
<dbReference type="EC" id="5.6.2.4" evidence="1"/>
<dbReference type="EMBL" id="FO080195">
    <property type="protein sequence ID" value="CCD61879.1"/>
    <property type="molecule type" value="Genomic_DNA"/>
</dbReference>
<dbReference type="EMBL" id="FO080195">
    <property type="protein sequence ID" value="CCD61880.1"/>
    <property type="molecule type" value="Genomic_DNA"/>
</dbReference>
<dbReference type="RefSeq" id="NP_001022656.1">
    <molecule id="Q9TXJ8-1"/>
    <property type="nucleotide sequence ID" value="NM_001027485.3"/>
</dbReference>
<dbReference type="RefSeq" id="NP_001022657.1">
    <molecule id="Q9TXJ8-2"/>
    <property type="nucleotide sequence ID" value="NM_001027486.5"/>
</dbReference>
<dbReference type="SMR" id="Q9TXJ8"/>
<dbReference type="BioGRID" id="40515">
    <property type="interactions" value="5"/>
</dbReference>
<dbReference type="FunCoup" id="Q9TXJ8">
    <property type="interactions" value="2678"/>
</dbReference>
<dbReference type="STRING" id="6239.K02F3.12a.1"/>
<dbReference type="PaxDb" id="6239-K02F3.12a"/>
<dbReference type="PeptideAtlas" id="Q9TXJ8"/>
<dbReference type="EnsemblMetazoa" id="K02F3.12a.1">
    <molecule id="Q9TXJ8-1"/>
    <property type="protein sequence ID" value="K02F3.12a.1"/>
    <property type="gene ID" value="WBGene00019334"/>
</dbReference>
<dbReference type="EnsemblMetazoa" id="K02F3.12b.1">
    <molecule id="Q9TXJ8-2"/>
    <property type="protein sequence ID" value="K02F3.12b.1"/>
    <property type="gene ID" value="WBGene00019334"/>
</dbReference>
<dbReference type="GeneID" id="175246"/>
<dbReference type="KEGG" id="cel:CELE_K02F3.12"/>
<dbReference type="UCSC" id="K02F3.12a">
    <property type="organism name" value="c. elegans"/>
</dbReference>
<dbReference type="AGR" id="WB:WBGene00019334"/>
<dbReference type="CTD" id="175246"/>
<dbReference type="WormBase" id="K02F3.12a">
    <molecule id="Q9TXJ8-1"/>
    <property type="protein sequence ID" value="CE33668"/>
    <property type="gene ID" value="WBGene00019334"/>
</dbReference>
<dbReference type="WormBase" id="K02F3.12b">
    <molecule id="Q9TXJ8-2"/>
    <property type="protein sequence ID" value="CE38084"/>
    <property type="gene ID" value="WBGene00019334"/>
</dbReference>
<dbReference type="eggNOG" id="KOG0353">
    <property type="taxonomic scope" value="Eukaryota"/>
</dbReference>
<dbReference type="GeneTree" id="ENSGT00940000157013"/>
<dbReference type="InParanoid" id="Q9TXJ8"/>
<dbReference type="OMA" id="FKLSTMV"/>
<dbReference type="OrthoDB" id="10261556at2759"/>
<dbReference type="PhylomeDB" id="Q9TXJ8"/>
<dbReference type="PRO" id="PR:Q9TXJ8"/>
<dbReference type="Proteomes" id="UP000001940">
    <property type="component" value="Chromosome III"/>
</dbReference>
<dbReference type="Bgee" id="WBGene00019334">
    <property type="expression patterns" value="Expressed in germ line (C elegans) and 4 other cell types or tissues"/>
</dbReference>
<dbReference type="GO" id="GO:0005694">
    <property type="term" value="C:chromosome"/>
    <property type="evidence" value="ECO:0000318"/>
    <property type="project" value="GO_Central"/>
</dbReference>
<dbReference type="GO" id="GO:0005737">
    <property type="term" value="C:cytoplasm"/>
    <property type="evidence" value="ECO:0000318"/>
    <property type="project" value="GO_Central"/>
</dbReference>
<dbReference type="GO" id="GO:0005634">
    <property type="term" value="C:nucleus"/>
    <property type="evidence" value="ECO:0007669"/>
    <property type="project" value="UniProtKB-SubCell"/>
</dbReference>
<dbReference type="GO" id="GO:0043138">
    <property type="term" value="F:3'-5' DNA helicase activity"/>
    <property type="evidence" value="ECO:0000318"/>
    <property type="project" value="GO_Central"/>
</dbReference>
<dbReference type="GO" id="GO:0005524">
    <property type="term" value="F:ATP binding"/>
    <property type="evidence" value="ECO:0007669"/>
    <property type="project" value="UniProtKB-KW"/>
</dbReference>
<dbReference type="GO" id="GO:0016887">
    <property type="term" value="F:ATP hydrolysis activity"/>
    <property type="evidence" value="ECO:0007669"/>
    <property type="project" value="RHEA"/>
</dbReference>
<dbReference type="GO" id="GO:0003677">
    <property type="term" value="F:DNA binding"/>
    <property type="evidence" value="ECO:0007669"/>
    <property type="project" value="UniProtKB-KW"/>
</dbReference>
<dbReference type="GO" id="GO:0009378">
    <property type="term" value="F:four-way junction helicase activity"/>
    <property type="evidence" value="ECO:0000318"/>
    <property type="project" value="GO_Central"/>
</dbReference>
<dbReference type="GO" id="GO:0046872">
    <property type="term" value="F:metal ion binding"/>
    <property type="evidence" value="ECO:0007669"/>
    <property type="project" value="UniProtKB-KW"/>
</dbReference>
<dbReference type="GO" id="GO:0006260">
    <property type="term" value="P:DNA replication"/>
    <property type="evidence" value="ECO:0000318"/>
    <property type="project" value="GO_Central"/>
</dbReference>
<dbReference type="GO" id="GO:0000724">
    <property type="term" value="P:double-strand break repair via homologous recombination"/>
    <property type="evidence" value="ECO:0000318"/>
    <property type="project" value="GO_Central"/>
</dbReference>
<dbReference type="CDD" id="cd18015">
    <property type="entry name" value="DEXHc_RecQ1"/>
    <property type="match status" value="1"/>
</dbReference>
<dbReference type="CDD" id="cd18794">
    <property type="entry name" value="SF2_C_RecQ"/>
    <property type="match status" value="1"/>
</dbReference>
<dbReference type="FunFam" id="3.40.50.300:FF:000596">
    <property type="entry name" value="ATP-dependent DNA helicase"/>
    <property type="match status" value="1"/>
</dbReference>
<dbReference type="FunFam" id="3.40.50.300:FF:001544">
    <property type="entry name" value="ATP-dependent DNA helicase"/>
    <property type="match status" value="1"/>
</dbReference>
<dbReference type="Gene3D" id="3.40.50.300">
    <property type="entry name" value="P-loop containing nucleotide triphosphate hydrolases"/>
    <property type="match status" value="2"/>
</dbReference>
<dbReference type="Gene3D" id="1.10.10.10">
    <property type="entry name" value="Winged helix-like DNA-binding domain superfamily/Winged helix DNA-binding domain"/>
    <property type="match status" value="1"/>
</dbReference>
<dbReference type="InterPro" id="IPR011545">
    <property type="entry name" value="DEAD/DEAH_box_helicase_dom"/>
</dbReference>
<dbReference type="InterPro" id="IPR004589">
    <property type="entry name" value="DNA_helicase_ATP-dep_RecQ"/>
</dbReference>
<dbReference type="InterPro" id="IPR014001">
    <property type="entry name" value="Helicase_ATP-bd"/>
</dbReference>
<dbReference type="InterPro" id="IPR001650">
    <property type="entry name" value="Helicase_C-like"/>
</dbReference>
<dbReference type="InterPro" id="IPR027417">
    <property type="entry name" value="P-loop_NTPase"/>
</dbReference>
<dbReference type="InterPro" id="IPR032284">
    <property type="entry name" value="RecQ_Zn-bd"/>
</dbReference>
<dbReference type="InterPro" id="IPR001763">
    <property type="entry name" value="Rhodanese-like_dom"/>
</dbReference>
<dbReference type="InterPro" id="IPR036388">
    <property type="entry name" value="WH-like_DNA-bd_sf"/>
</dbReference>
<dbReference type="NCBIfam" id="TIGR00614">
    <property type="entry name" value="recQ_fam"/>
    <property type="match status" value="1"/>
</dbReference>
<dbReference type="PANTHER" id="PTHR13710:SF105">
    <property type="entry name" value="ATP-DEPENDENT DNA HELICASE Q1"/>
    <property type="match status" value="1"/>
</dbReference>
<dbReference type="PANTHER" id="PTHR13710">
    <property type="entry name" value="DNA HELICASE RECQ FAMILY MEMBER"/>
    <property type="match status" value="1"/>
</dbReference>
<dbReference type="Pfam" id="PF00270">
    <property type="entry name" value="DEAD"/>
    <property type="match status" value="1"/>
</dbReference>
<dbReference type="Pfam" id="PF00271">
    <property type="entry name" value="Helicase_C"/>
    <property type="match status" value="1"/>
</dbReference>
<dbReference type="Pfam" id="PF16124">
    <property type="entry name" value="RecQ_Zn_bind"/>
    <property type="match status" value="1"/>
</dbReference>
<dbReference type="SMART" id="SM00487">
    <property type="entry name" value="DEXDc"/>
    <property type="match status" value="1"/>
</dbReference>
<dbReference type="SMART" id="SM00490">
    <property type="entry name" value="HELICc"/>
    <property type="match status" value="1"/>
</dbReference>
<dbReference type="SUPFAM" id="SSF52540">
    <property type="entry name" value="P-loop containing nucleoside triphosphate hydrolases"/>
    <property type="match status" value="1"/>
</dbReference>
<dbReference type="PROSITE" id="PS51192">
    <property type="entry name" value="HELICASE_ATP_BIND_1"/>
    <property type="match status" value="1"/>
</dbReference>
<dbReference type="PROSITE" id="PS51194">
    <property type="entry name" value="HELICASE_CTER"/>
    <property type="match status" value="1"/>
</dbReference>
<protein>
    <recommendedName>
        <fullName evidence="1">Putative ATP-dependent DNA helicase Q1</fullName>
        <ecNumber evidence="1">5.6.2.4</ecNumber>
    </recommendedName>
    <alternativeName>
        <fullName evidence="8">DNA 3'-5' helicase Q1</fullName>
    </alternativeName>
</protein>
<keyword id="KW-0024">Alternative initiation</keyword>
<keyword id="KW-0067">ATP-binding</keyword>
<keyword id="KW-0238">DNA-binding</keyword>
<keyword id="KW-0347">Helicase</keyword>
<keyword id="KW-0378">Hydrolase</keyword>
<keyword id="KW-0413">Isomerase</keyword>
<keyword id="KW-0479">Metal-binding</keyword>
<keyword id="KW-0547">Nucleotide-binding</keyword>
<keyword id="KW-0539">Nucleus</keyword>
<keyword id="KW-1185">Reference proteome</keyword>
<keyword id="KW-0862">Zinc</keyword>
<name>RECQ1_CAEEL</name>
<comment type="function">
    <text evidence="1">DNA helicase that may play a role in the repair of DNA that is damaged by ultraviolet light or other mutagens. Exhibits a magnesium-dependent ATP-dependent DNA-helicase activity that unwinds single- and double-stranded DNA in a 3'-5' direction (By similarity).</text>
</comment>
<comment type="catalytic activity">
    <reaction evidence="1">
        <text>Couples ATP hydrolysis with the unwinding of duplex DNA by translocating in the 3'-5' direction.</text>
        <dbReference type="EC" id="5.6.2.4"/>
    </reaction>
</comment>
<comment type="catalytic activity">
    <reaction evidence="1">
        <text>ATP + H2O = ADP + phosphate + H(+)</text>
        <dbReference type="Rhea" id="RHEA:13065"/>
        <dbReference type="ChEBI" id="CHEBI:15377"/>
        <dbReference type="ChEBI" id="CHEBI:15378"/>
        <dbReference type="ChEBI" id="CHEBI:30616"/>
        <dbReference type="ChEBI" id="CHEBI:43474"/>
        <dbReference type="ChEBI" id="CHEBI:456216"/>
    </reaction>
</comment>
<comment type="cofactor">
    <cofactor evidence="1">
        <name>Zn(2+)</name>
        <dbReference type="ChEBI" id="CHEBI:29105"/>
    </cofactor>
    <text evidence="1">Binds 1 Zn(2+) per monomer.</text>
</comment>
<comment type="subcellular location">
    <subcellularLocation>
        <location evidence="1">Nucleus</location>
    </subcellularLocation>
</comment>
<comment type="alternative products">
    <event type="alternative initiation"/>
    <isoform>
        <id>Q9TXJ8-1</id>
        <name evidence="6">a</name>
        <sequence type="displayed"/>
    </isoform>
    <isoform>
        <id>Q9TXJ8-2</id>
        <name evidence="6">b</name>
        <sequence type="described" ref="VSP_039081"/>
    </isoform>
</comment>
<comment type="similarity">
    <text evidence="2">Belongs to the helicase family. RecQ subfamily.</text>
</comment>
<sequence>MATFIFSRGNIFFYVNKITIPDLMSDVLLSKLSTELADLDGEIGQIDQQISQLRRKKSELTQKRQAIERKIELKTNEDSDVVTDRWDRDGFPWSDEATKILKEQFHLEKFRPLQRAAINAVMSKEDAVVILSTGGGKSLCYQLPALLANGLALVVSPLISLVEDQILQLRSLGIDSSSLNANTSKEEAKRVEDAITNKDSKFRLLYVTPEKLAKSKKMMNKLEKSLSVGFLKLIAIDEVHCCSQWGHDFRTDYSFLNVLKRQFKGVPILGLTATATSNVLDDVKDMLGIQAALTFRAGFNRSNLKYKVVQKPGSEDECTEEIAKTIKRDFAGQTGIIYCLSRNDCEKVAKALKSHGIKAKHYHAYMEPVDRSGAHQGWISGKIQVIVATVAFGMGIDKPNVRFVIHHSLPKSIENYYQESGRAGRDGQPATCILYYRLADIFKQSSMVQQERTGIQNLYNMVRYAADSSTCRRVKLAEHFEEAWEPSWCQKQCDTCENGNGFVGTSSKESTDVSEAAKTTVRIIEEHLNSAKDGSGRITGNKLVELLTKKLKGSRNREFCEKLIVNLLLEGYLQEDFHYTVYSVISYVVIGSKWRVYNGKDAIKMRHVEESKSRKRKASSSVEEEDVMVLD</sequence>
<proteinExistence type="inferred from homology"/>
<reference evidence="8" key="1">
    <citation type="journal article" date="1998" name="Science">
        <title>Genome sequence of the nematode C. elegans: a platform for investigating biology.</title>
        <authorList>
            <consortium name="The C. elegans sequencing consortium"/>
        </authorList>
    </citation>
    <scope>NUCLEOTIDE SEQUENCE [LARGE SCALE GENOMIC DNA]</scope>
    <scope>ALTERNATIVE SPLICING</scope>
    <source>
        <strain>Bristol N2</strain>
    </source>
</reference>
<reference evidence="8" key="2">
    <citation type="journal article" date="1999" name="Genetics">
        <title>Evolution of the RECQ family of helicases: a Drosophila homolog, Dmblm, is similar to the human Bloom syndrome gene.</title>
        <authorList>
            <person name="Kusano K."/>
            <person name="Berres M.E."/>
            <person name="Engels W.R."/>
        </authorList>
    </citation>
    <scope>CONCEPTUAL TRANSLATION</scope>
</reference>
<organism>
    <name type="scientific">Caenorhabditis elegans</name>
    <dbReference type="NCBI Taxonomy" id="6239"/>
    <lineage>
        <taxon>Eukaryota</taxon>
        <taxon>Metazoa</taxon>
        <taxon>Ecdysozoa</taxon>
        <taxon>Nematoda</taxon>
        <taxon>Chromadorea</taxon>
        <taxon>Rhabditida</taxon>
        <taxon>Rhabditina</taxon>
        <taxon>Rhabditomorpha</taxon>
        <taxon>Rhabditoidea</taxon>
        <taxon>Rhabditidae</taxon>
        <taxon>Peloderinae</taxon>
        <taxon>Caenorhabditis</taxon>
    </lineage>
</organism>
<evidence type="ECO:0000250" key="1">
    <source>
        <dbReference type="UniProtKB" id="P46063"/>
    </source>
</evidence>
<evidence type="ECO:0000255" key="2"/>
<evidence type="ECO:0000255" key="3">
    <source>
        <dbReference type="PROSITE-ProRule" id="PRU00541"/>
    </source>
</evidence>
<evidence type="ECO:0000255" key="4">
    <source>
        <dbReference type="PROSITE-ProRule" id="PRU00542"/>
    </source>
</evidence>
<evidence type="ECO:0000256" key="5">
    <source>
        <dbReference type="SAM" id="MobiDB-lite"/>
    </source>
</evidence>
<evidence type="ECO:0000269" key="6">
    <source>
    </source>
</evidence>
<evidence type="ECO:0000303" key="7">
    <source>
    </source>
</evidence>
<evidence type="ECO:0000305" key="8"/>
<accession>Q9TXJ8</accession>
<accession>Q5DX50</accession>
<feature type="chain" id="PRO_0000393940" description="Putative ATP-dependent DNA helicase Q1">
    <location>
        <begin position="1"/>
        <end position="631"/>
    </location>
</feature>
<feature type="domain" description="Helicase ATP-binding" evidence="3">
    <location>
        <begin position="118"/>
        <end position="293"/>
    </location>
</feature>
<feature type="domain" description="Helicase C-terminal" evidence="4">
    <location>
        <begin position="318"/>
        <end position="466"/>
    </location>
</feature>
<feature type="region of interest" description="Disordered" evidence="5">
    <location>
        <begin position="610"/>
        <end position="631"/>
    </location>
</feature>
<feature type="short sequence motif" description="DEVH box" evidence="2">
    <location>
        <begin position="237"/>
        <end position="240"/>
    </location>
</feature>
<feature type="compositionally biased region" description="Acidic residues" evidence="5">
    <location>
        <begin position="622"/>
        <end position="631"/>
    </location>
</feature>
<feature type="binding site" evidence="3">
    <location>
        <begin position="131"/>
        <end position="138"/>
    </location>
    <ligand>
        <name>ATP</name>
        <dbReference type="ChEBI" id="CHEBI:30616"/>
    </ligand>
</feature>
<feature type="binding site" evidence="1">
    <location>
        <position position="471"/>
    </location>
    <ligand>
        <name>Zn(2+)</name>
        <dbReference type="ChEBI" id="CHEBI:29105"/>
    </ligand>
</feature>
<feature type="binding site" evidence="1">
    <location>
        <position position="489"/>
    </location>
    <ligand>
        <name>Zn(2+)</name>
        <dbReference type="ChEBI" id="CHEBI:29105"/>
    </ligand>
</feature>
<feature type="binding site" evidence="1">
    <location>
        <position position="493"/>
    </location>
    <ligand>
        <name>Zn(2+)</name>
        <dbReference type="ChEBI" id="CHEBI:29105"/>
    </ligand>
</feature>
<feature type="binding site" evidence="1">
    <location>
        <position position="496"/>
    </location>
    <ligand>
        <name>Zn(2+)</name>
        <dbReference type="ChEBI" id="CHEBI:29105"/>
    </ligand>
</feature>
<feature type="splice variant" id="VSP_039081" description="In isoform b." evidence="7">
    <location>
        <begin position="1"/>
        <end position="23"/>
    </location>
</feature>